<gene>
    <name evidence="1" type="primary">pheT</name>
    <name type="ordered locus">DIP1166</name>
</gene>
<reference key="1">
    <citation type="journal article" date="2003" name="Nucleic Acids Res.">
        <title>The complete genome sequence and analysis of Corynebacterium diphtheriae NCTC13129.</title>
        <authorList>
            <person name="Cerdeno-Tarraga A.-M."/>
            <person name="Efstratiou A."/>
            <person name="Dover L.G."/>
            <person name="Holden M.T.G."/>
            <person name="Pallen M.J."/>
            <person name="Bentley S.D."/>
            <person name="Besra G.S."/>
            <person name="Churcher C.M."/>
            <person name="James K.D."/>
            <person name="De Zoysa A."/>
            <person name="Chillingworth T."/>
            <person name="Cronin A."/>
            <person name="Dowd L."/>
            <person name="Feltwell T."/>
            <person name="Hamlin N."/>
            <person name="Holroyd S."/>
            <person name="Jagels K."/>
            <person name="Moule S."/>
            <person name="Quail M.A."/>
            <person name="Rabbinowitsch E."/>
            <person name="Rutherford K.M."/>
            <person name="Thomson N.R."/>
            <person name="Unwin L."/>
            <person name="Whitehead S."/>
            <person name="Barrell B.G."/>
            <person name="Parkhill J."/>
        </authorList>
    </citation>
    <scope>NUCLEOTIDE SEQUENCE [LARGE SCALE GENOMIC DNA]</scope>
    <source>
        <strain>ATCC 700971 / NCTC 13129 / Biotype gravis</strain>
    </source>
</reference>
<protein>
    <recommendedName>
        <fullName evidence="1">Phenylalanine--tRNA ligase beta subunit</fullName>
        <ecNumber evidence="1">6.1.1.20</ecNumber>
    </recommendedName>
    <alternativeName>
        <fullName evidence="1">Phenylalanyl-tRNA synthetase beta subunit</fullName>
        <shortName evidence="1">PheRS</shortName>
    </alternativeName>
</protein>
<evidence type="ECO:0000255" key="1">
    <source>
        <dbReference type="HAMAP-Rule" id="MF_00283"/>
    </source>
</evidence>
<proteinExistence type="inferred from homology"/>
<accession>Q6NHH1</accession>
<dbReference type="EC" id="6.1.1.20" evidence="1"/>
<dbReference type="EMBL" id="BX248357">
    <property type="protein sequence ID" value="CAE49686.1"/>
    <property type="molecule type" value="Genomic_DNA"/>
</dbReference>
<dbReference type="RefSeq" id="WP_010934854.1">
    <property type="nucleotide sequence ID" value="NC_002935.2"/>
</dbReference>
<dbReference type="SMR" id="Q6NHH1"/>
<dbReference type="STRING" id="257309.DIP1166"/>
<dbReference type="DNASU" id="2648566"/>
<dbReference type="KEGG" id="cdi:DIP1166"/>
<dbReference type="HOGENOM" id="CLU_016891_0_0_11"/>
<dbReference type="Proteomes" id="UP000002198">
    <property type="component" value="Chromosome"/>
</dbReference>
<dbReference type="GO" id="GO:0009328">
    <property type="term" value="C:phenylalanine-tRNA ligase complex"/>
    <property type="evidence" value="ECO:0007669"/>
    <property type="project" value="TreeGrafter"/>
</dbReference>
<dbReference type="GO" id="GO:0005524">
    <property type="term" value="F:ATP binding"/>
    <property type="evidence" value="ECO:0007669"/>
    <property type="project" value="UniProtKB-UniRule"/>
</dbReference>
<dbReference type="GO" id="GO:0000287">
    <property type="term" value="F:magnesium ion binding"/>
    <property type="evidence" value="ECO:0007669"/>
    <property type="project" value="UniProtKB-UniRule"/>
</dbReference>
<dbReference type="GO" id="GO:0004826">
    <property type="term" value="F:phenylalanine-tRNA ligase activity"/>
    <property type="evidence" value="ECO:0007669"/>
    <property type="project" value="UniProtKB-UniRule"/>
</dbReference>
<dbReference type="GO" id="GO:0000049">
    <property type="term" value="F:tRNA binding"/>
    <property type="evidence" value="ECO:0007669"/>
    <property type="project" value="UniProtKB-KW"/>
</dbReference>
<dbReference type="GO" id="GO:0006432">
    <property type="term" value="P:phenylalanyl-tRNA aminoacylation"/>
    <property type="evidence" value="ECO:0007669"/>
    <property type="project" value="UniProtKB-UniRule"/>
</dbReference>
<dbReference type="CDD" id="cd00769">
    <property type="entry name" value="PheRS_beta_core"/>
    <property type="match status" value="1"/>
</dbReference>
<dbReference type="CDD" id="cd02796">
    <property type="entry name" value="tRNA_bind_bactPheRS"/>
    <property type="match status" value="1"/>
</dbReference>
<dbReference type="FunFam" id="2.40.50.140:FF:000045">
    <property type="entry name" value="Phenylalanine--tRNA ligase beta subunit"/>
    <property type="match status" value="1"/>
</dbReference>
<dbReference type="FunFam" id="3.30.70.380:FF:000001">
    <property type="entry name" value="Phenylalanine--tRNA ligase beta subunit"/>
    <property type="match status" value="1"/>
</dbReference>
<dbReference type="FunFam" id="3.30.930.10:FF:000130">
    <property type="entry name" value="Phenylalanine--tRNA ligase beta subunit"/>
    <property type="match status" value="1"/>
</dbReference>
<dbReference type="Gene3D" id="3.30.56.10">
    <property type="match status" value="2"/>
</dbReference>
<dbReference type="Gene3D" id="3.30.930.10">
    <property type="entry name" value="Bira Bifunctional Protein, Domain 2"/>
    <property type="match status" value="1"/>
</dbReference>
<dbReference type="Gene3D" id="3.30.70.380">
    <property type="entry name" value="Ferrodoxin-fold anticodon-binding domain"/>
    <property type="match status" value="1"/>
</dbReference>
<dbReference type="Gene3D" id="2.40.50.140">
    <property type="entry name" value="Nucleic acid-binding proteins"/>
    <property type="match status" value="1"/>
</dbReference>
<dbReference type="Gene3D" id="3.50.40.10">
    <property type="entry name" value="Phenylalanyl-trna Synthetase, Chain B, domain 3"/>
    <property type="match status" value="1"/>
</dbReference>
<dbReference type="HAMAP" id="MF_00283">
    <property type="entry name" value="Phe_tRNA_synth_beta1"/>
    <property type="match status" value="1"/>
</dbReference>
<dbReference type="InterPro" id="IPR045864">
    <property type="entry name" value="aa-tRNA-synth_II/BPL/LPL"/>
</dbReference>
<dbReference type="InterPro" id="IPR005146">
    <property type="entry name" value="B3/B4_tRNA-bd"/>
</dbReference>
<dbReference type="InterPro" id="IPR009061">
    <property type="entry name" value="DNA-bd_dom_put_sf"/>
</dbReference>
<dbReference type="InterPro" id="IPR005121">
    <property type="entry name" value="Fdx_antiC-bd"/>
</dbReference>
<dbReference type="InterPro" id="IPR036690">
    <property type="entry name" value="Fdx_antiC-bd_sf"/>
</dbReference>
<dbReference type="InterPro" id="IPR012340">
    <property type="entry name" value="NA-bd_OB-fold"/>
</dbReference>
<dbReference type="InterPro" id="IPR045060">
    <property type="entry name" value="Phe-tRNA-ligase_IIc_bsu"/>
</dbReference>
<dbReference type="InterPro" id="IPR004532">
    <property type="entry name" value="Phe-tRNA-ligase_IIc_bsu_bact"/>
</dbReference>
<dbReference type="InterPro" id="IPR020825">
    <property type="entry name" value="Phe-tRNA_synthase-like_B3/B4"/>
</dbReference>
<dbReference type="InterPro" id="IPR041616">
    <property type="entry name" value="PheRS_beta_core"/>
</dbReference>
<dbReference type="InterPro" id="IPR002547">
    <property type="entry name" value="tRNA-bd_dom"/>
</dbReference>
<dbReference type="InterPro" id="IPR033714">
    <property type="entry name" value="tRNA_bind_bactPheRS"/>
</dbReference>
<dbReference type="InterPro" id="IPR005147">
    <property type="entry name" value="tRNA_synthase_B5-dom"/>
</dbReference>
<dbReference type="NCBIfam" id="TIGR00472">
    <property type="entry name" value="pheT_bact"/>
    <property type="match status" value="1"/>
</dbReference>
<dbReference type="PANTHER" id="PTHR10947:SF0">
    <property type="entry name" value="PHENYLALANINE--TRNA LIGASE BETA SUBUNIT"/>
    <property type="match status" value="1"/>
</dbReference>
<dbReference type="PANTHER" id="PTHR10947">
    <property type="entry name" value="PHENYLALANYL-TRNA SYNTHETASE BETA CHAIN AND LEUCINE-RICH REPEAT-CONTAINING PROTEIN 47"/>
    <property type="match status" value="1"/>
</dbReference>
<dbReference type="Pfam" id="PF03483">
    <property type="entry name" value="B3_4"/>
    <property type="match status" value="1"/>
</dbReference>
<dbReference type="Pfam" id="PF03484">
    <property type="entry name" value="B5"/>
    <property type="match status" value="1"/>
</dbReference>
<dbReference type="Pfam" id="PF03147">
    <property type="entry name" value="FDX-ACB"/>
    <property type="match status" value="1"/>
</dbReference>
<dbReference type="Pfam" id="PF01588">
    <property type="entry name" value="tRNA_bind"/>
    <property type="match status" value="1"/>
</dbReference>
<dbReference type="Pfam" id="PF17759">
    <property type="entry name" value="tRNA_synthFbeta"/>
    <property type="match status" value="1"/>
</dbReference>
<dbReference type="SMART" id="SM00873">
    <property type="entry name" value="B3_4"/>
    <property type="match status" value="1"/>
</dbReference>
<dbReference type="SMART" id="SM00874">
    <property type="entry name" value="B5"/>
    <property type="match status" value="1"/>
</dbReference>
<dbReference type="SMART" id="SM00896">
    <property type="entry name" value="FDX-ACB"/>
    <property type="match status" value="1"/>
</dbReference>
<dbReference type="SUPFAM" id="SSF54991">
    <property type="entry name" value="Anticodon-binding domain of PheRS"/>
    <property type="match status" value="1"/>
</dbReference>
<dbReference type="SUPFAM" id="SSF55681">
    <property type="entry name" value="Class II aaRS and biotin synthetases"/>
    <property type="match status" value="1"/>
</dbReference>
<dbReference type="SUPFAM" id="SSF50249">
    <property type="entry name" value="Nucleic acid-binding proteins"/>
    <property type="match status" value="1"/>
</dbReference>
<dbReference type="SUPFAM" id="SSF56037">
    <property type="entry name" value="PheT/TilS domain"/>
    <property type="match status" value="1"/>
</dbReference>
<dbReference type="SUPFAM" id="SSF46955">
    <property type="entry name" value="Putative DNA-binding domain"/>
    <property type="match status" value="1"/>
</dbReference>
<dbReference type="PROSITE" id="PS51483">
    <property type="entry name" value="B5"/>
    <property type="match status" value="1"/>
</dbReference>
<dbReference type="PROSITE" id="PS51447">
    <property type="entry name" value="FDX_ACB"/>
    <property type="match status" value="1"/>
</dbReference>
<dbReference type="PROSITE" id="PS50886">
    <property type="entry name" value="TRBD"/>
    <property type="match status" value="1"/>
</dbReference>
<comment type="catalytic activity">
    <reaction evidence="1">
        <text>tRNA(Phe) + L-phenylalanine + ATP = L-phenylalanyl-tRNA(Phe) + AMP + diphosphate + H(+)</text>
        <dbReference type="Rhea" id="RHEA:19413"/>
        <dbReference type="Rhea" id="RHEA-COMP:9668"/>
        <dbReference type="Rhea" id="RHEA-COMP:9699"/>
        <dbReference type="ChEBI" id="CHEBI:15378"/>
        <dbReference type="ChEBI" id="CHEBI:30616"/>
        <dbReference type="ChEBI" id="CHEBI:33019"/>
        <dbReference type="ChEBI" id="CHEBI:58095"/>
        <dbReference type="ChEBI" id="CHEBI:78442"/>
        <dbReference type="ChEBI" id="CHEBI:78531"/>
        <dbReference type="ChEBI" id="CHEBI:456215"/>
        <dbReference type="EC" id="6.1.1.20"/>
    </reaction>
</comment>
<comment type="cofactor">
    <cofactor evidence="1">
        <name>Mg(2+)</name>
        <dbReference type="ChEBI" id="CHEBI:18420"/>
    </cofactor>
    <text evidence="1">Binds 2 magnesium ions per tetramer.</text>
</comment>
<comment type="subunit">
    <text evidence="1">Tetramer of two alpha and two beta subunits.</text>
</comment>
<comment type="subcellular location">
    <subcellularLocation>
        <location evidence="1">Cytoplasm</location>
    </subcellularLocation>
</comment>
<comment type="similarity">
    <text evidence="1">Belongs to the phenylalanyl-tRNA synthetase beta subunit family. Type 1 subfamily.</text>
</comment>
<feature type="chain" id="PRO_0000126873" description="Phenylalanine--tRNA ligase beta subunit">
    <location>
        <begin position="1"/>
        <end position="836"/>
    </location>
</feature>
<feature type="domain" description="tRNA-binding" evidence="1">
    <location>
        <begin position="44"/>
        <end position="160"/>
    </location>
</feature>
<feature type="domain" description="B5" evidence="1">
    <location>
        <begin position="420"/>
        <end position="495"/>
    </location>
</feature>
<feature type="domain" description="FDX-ACB" evidence="1">
    <location>
        <begin position="742"/>
        <end position="835"/>
    </location>
</feature>
<feature type="binding site" evidence="1">
    <location>
        <position position="473"/>
    </location>
    <ligand>
        <name>Mg(2+)</name>
        <dbReference type="ChEBI" id="CHEBI:18420"/>
        <note>shared with alpha subunit</note>
    </ligand>
</feature>
<feature type="binding site" evidence="1">
    <location>
        <position position="479"/>
    </location>
    <ligand>
        <name>Mg(2+)</name>
        <dbReference type="ChEBI" id="CHEBI:18420"/>
        <note>shared with alpha subunit</note>
    </ligand>
</feature>
<feature type="binding site" evidence="1">
    <location>
        <position position="482"/>
    </location>
    <ligand>
        <name>Mg(2+)</name>
        <dbReference type="ChEBI" id="CHEBI:18420"/>
        <note>shared with alpha subunit</note>
    </ligand>
</feature>
<feature type="binding site" evidence="1">
    <location>
        <position position="483"/>
    </location>
    <ligand>
        <name>Mg(2+)</name>
        <dbReference type="ChEBI" id="CHEBI:18420"/>
        <note>shared with alpha subunit</note>
    </ligand>
</feature>
<organism>
    <name type="scientific">Corynebacterium diphtheriae (strain ATCC 700971 / NCTC 13129 / Biotype gravis)</name>
    <dbReference type="NCBI Taxonomy" id="257309"/>
    <lineage>
        <taxon>Bacteria</taxon>
        <taxon>Bacillati</taxon>
        <taxon>Actinomycetota</taxon>
        <taxon>Actinomycetes</taxon>
        <taxon>Mycobacteriales</taxon>
        <taxon>Corynebacteriaceae</taxon>
        <taxon>Corynebacterium</taxon>
    </lineage>
</organism>
<keyword id="KW-0030">Aminoacyl-tRNA synthetase</keyword>
<keyword id="KW-0067">ATP-binding</keyword>
<keyword id="KW-0963">Cytoplasm</keyword>
<keyword id="KW-0436">Ligase</keyword>
<keyword id="KW-0460">Magnesium</keyword>
<keyword id="KW-0479">Metal-binding</keyword>
<keyword id="KW-0547">Nucleotide-binding</keyword>
<keyword id="KW-0648">Protein biosynthesis</keyword>
<keyword id="KW-1185">Reference proteome</keyword>
<keyword id="KW-0694">RNA-binding</keyword>
<keyword id="KW-0820">tRNA-binding</keyword>
<name>SYFB_CORDI</name>
<sequence>MLISQNWVTELLGRSNPDWKVSPAELDSGYVRVGFETEGYSAIPETTGPLVIGRVETIEELEGFKKPIRHCFVNVGDANGTGELQSIVCGARNFQEGSYVVVSLPGAVLPGNFAISARETYGRMSAGMICSAAELGLSDKQNSGIITLPNEIAEPGTDARSIVGLDDTVFDVNITPDRGYALSARGLTRELASAFNLKFVDPAVDLNVAGVDTSDVPESSGELIKVDLRPETQARRFGVRKVSGIDPKAPTPFWMQRELMLSGQRCVNAATDVTNFVMLLLGQPMHAFDANLIKGGLVVRNALEGESFETLDHVKRTLSAEDVVISDDTGIQSLAGVMGGTTSEISDETTDVFFEAANWHPITTARTSRRHKLSTEASRRFERGVDPEIIEVALDVACALLVSIAGGSVESARTLIGSAPSMPQIRMKTSRPAELAGVAYSDATVIARLKEVGCAVEVDGDDLLVTPPTWRPDMTMSADLVEEVLRLEGLEDIPTIVPLAPVGSGLSPAQLRRRAIGHALAYSGYAEILPTPFIRNDTFDVWGLAADDERRSVVTVQNPLDAEYGVLATTLLPSMLEAVTRNVSRGQTSVNLFGLQQVSFKRGSGISPMLDVRQRPSDNEVAELLNSLPVQPLHVATVGAGFMELEGPWGHGRTYSFADAIESARVVARAAGVELNVENVEMLPWHPGRCAALKAGDHIVGYAGELHPQIVEALNLPARTCAMELDVSALPLKESFPAPVLSAFPVLHQDLALVVDESVPAESVRKVIEDAAGELLEKVELFDVYRSEALGAEKKSLAFSLEFRAQDRTLTDDECSEGRLAAAGRAAELFGATMRA</sequence>